<feature type="chain" id="PRO_0000207749" description="Photosystem I reaction center subunit III">
    <location>
        <begin position="1"/>
        <end position="20" status="greater than"/>
    </location>
</feature>
<feature type="region of interest" description="Disordered" evidence="1">
    <location>
        <begin position="1"/>
        <end position="20"/>
    </location>
</feature>
<feature type="compositionally biased region" description="Basic and acidic residues" evidence="1">
    <location>
        <begin position="9"/>
        <end position="20"/>
    </location>
</feature>
<feature type="non-terminal residue">
    <location>
        <position position="20"/>
    </location>
</feature>
<accession>P13193</accession>
<organism>
    <name type="scientific">Zea mays</name>
    <name type="common">Maize</name>
    <dbReference type="NCBI Taxonomy" id="4577"/>
    <lineage>
        <taxon>Eukaryota</taxon>
        <taxon>Viridiplantae</taxon>
        <taxon>Streptophyta</taxon>
        <taxon>Embryophyta</taxon>
        <taxon>Tracheophyta</taxon>
        <taxon>Spermatophyta</taxon>
        <taxon>Magnoliopsida</taxon>
        <taxon>Liliopsida</taxon>
        <taxon>Poales</taxon>
        <taxon>Poaceae</taxon>
        <taxon>PACMAD clade</taxon>
        <taxon>Panicoideae</taxon>
        <taxon>Andropogonodae</taxon>
        <taxon>Andropogoneae</taxon>
        <taxon>Tripsacinae</taxon>
        <taxon>Zea</taxon>
    </lineage>
</organism>
<proteinExistence type="evidence at protein level"/>
<comment type="function">
    <text>Probably participates in efficiency of electron transfer from plastocyanin to P700 (or cytochrome c553 in algae and cyanobacteria). This plastocyanin-docking protein contributes to the specific association of plastocyanin to PSI.</text>
</comment>
<comment type="subcellular location">
    <subcellularLocation>
        <location>Plastid</location>
        <location>Chloroplast thylakoid lumen</location>
    </subcellularLocation>
</comment>
<comment type="similarity">
    <text evidence="2">Belongs to the PsaF family.</text>
</comment>
<keyword id="KW-0150">Chloroplast</keyword>
<keyword id="KW-0903">Direct protein sequencing</keyword>
<keyword id="KW-0602">Photosynthesis</keyword>
<keyword id="KW-0603">Photosystem I</keyword>
<keyword id="KW-0934">Plastid</keyword>
<keyword id="KW-1185">Reference proteome</keyword>
<keyword id="KW-0793">Thylakoid</keyword>
<gene>
    <name type="primary">PSAF</name>
</gene>
<name>PSAF_MAIZE</name>
<reference key="1">
    <citation type="journal article" date="1989" name="FEBS Lett.">
        <title>Correlation of some published amino acid sequences for photosystem I polypeptides to a 17 kDa LHCI pigment-protein and to subunits III and IV of the core complex.</title>
        <authorList>
            <person name="Anandan S."/>
            <person name="Vainstein A."/>
            <person name="Thornber J.P."/>
        </authorList>
    </citation>
    <scope>PROTEIN SEQUENCE</scope>
    <source>
        <strain>cv. N273</strain>
    </source>
</reference>
<dbReference type="PIR" id="S06150">
    <property type="entry name" value="S06150"/>
</dbReference>
<dbReference type="STRING" id="4577.P13193"/>
<dbReference type="MaizeGDB" id="69542"/>
<dbReference type="InParanoid" id="P13193"/>
<dbReference type="Proteomes" id="UP000007305">
    <property type="component" value="Unplaced"/>
</dbReference>
<dbReference type="GO" id="GO:0009543">
    <property type="term" value="C:chloroplast thylakoid lumen"/>
    <property type="evidence" value="ECO:0007669"/>
    <property type="project" value="UniProtKB-SubCell"/>
</dbReference>
<dbReference type="GO" id="GO:0009522">
    <property type="term" value="C:photosystem I"/>
    <property type="evidence" value="ECO:0007669"/>
    <property type="project" value="UniProtKB-KW"/>
</dbReference>
<dbReference type="GO" id="GO:0015979">
    <property type="term" value="P:photosynthesis"/>
    <property type="evidence" value="ECO:0007669"/>
    <property type="project" value="UniProtKB-KW"/>
</dbReference>
<sequence>AIAGLTPPKESKAFAKXEKN</sequence>
<protein>
    <recommendedName>
        <fullName>Photosystem I reaction center subunit III</fullName>
    </recommendedName>
    <alternativeName>
        <fullName>Light-harvesting complex I 17 kDa protein</fullName>
    </alternativeName>
    <alternativeName>
        <fullName>PSI-F</fullName>
    </alternativeName>
</protein>
<evidence type="ECO:0000256" key="1">
    <source>
        <dbReference type="SAM" id="MobiDB-lite"/>
    </source>
</evidence>
<evidence type="ECO:0000305" key="2"/>